<evidence type="ECO:0000255" key="1">
    <source>
        <dbReference type="HAMAP-Rule" id="MF_00766"/>
    </source>
</evidence>
<reference key="1">
    <citation type="submission" date="2007-02" db="EMBL/GenBank/DDBJ databases">
        <title>Complete sequence of chromosome of Yersinia pestis Pestoides F.</title>
        <authorList>
            <consortium name="US DOE Joint Genome Institute"/>
            <person name="Copeland A."/>
            <person name="Lucas S."/>
            <person name="Lapidus A."/>
            <person name="Barry K."/>
            <person name="Detter J.C."/>
            <person name="Glavina del Rio T."/>
            <person name="Hammon N."/>
            <person name="Israni S."/>
            <person name="Dalin E."/>
            <person name="Tice H."/>
            <person name="Pitluck S."/>
            <person name="Di Bartolo G."/>
            <person name="Chain P."/>
            <person name="Malfatti S."/>
            <person name="Shin M."/>
            <person name="Vergez L."/>
            <person name="Schmutz J."/>
            <person name="Larimer F."/>
            <person name="Land M."/>
            <person name="Hauser L."/>
            <person name="Worsham P."/>
            <person name="Chu M."/>
            <person name="Bearden S."/>
            <person name="Garcia E."/>
            <person name="Richardson P."/>
        </authorList>
    </citation>
    <scope>NUCLEOTIDE SEQUENCE [LARGE SCALE GENOMIC DNA]</scope>
    <source>
        <strain>Pestoides F</strain>
    </source>
</reference>
<comment type="function">
    <text evidence="1">Peptidoglycan polymerase that catalyzes glycan chain elongation from lipid-linked precursors.</text>
</comment>
<comment type="catalytic activity">
    <reaction evidence="1">
        <text>[GlcNAc-(1-&gt;4)-Mur2Ac(oyl-L-Ala-gamma-D-Glu-L-Lys-D-Ala-D-Ala)](n)-di-trans,octa-cis-undecaprenyl diphosphate + beta-D-GlcNAc-(1-&gt;4)-Mur2Ac(oyl-L-Ala-gamma-D-Glu-L-Lys-D-Ala-D-Ala)-di-trans,octa-cis-undecaprenyl diphosphate = [GlcNAc-(1-&gt;4)-Mur2Ac(oyl-L-Ala-gamma-D-Glu-L-Lys-D-Ala-D-Ala)](n+1)-di-trans,octa-cis-undecaprenyl diphosphate + di-trans,octa-cis-undecaprenyl diphosphate + H(+)</text>
        <dbReference type="Rhea" id="RHEA:23708"/>
        <dbReference type="Rhea" id="RHEA-COMP:9602"/>
        <dbReference type="Rhea" id="RHEA-COMP:9603"/>
        <dbReference type="ChEBI" id="CHEBI:15378"/>
        <dbReference type="ChEBI" id="CHEBI:58405"/>
        <dbReference type="ChEBI" id="CHEBI:60033"/>
        <dbReference type="ChEBI" id="CHEBI:78435"/>
        <dbReference type="EC" id="2.4.99.28"/>
    </reaction>
</comment>
<comment type="pathway">
    <text evidence="1">Cell wall biogenesis; peptidoglycan biosynthesis.</text>
</comment>
<comment type="subcellular location">
    <subcellularLocation>
        <location evidence="1">Cell inner membrane</location>
        <topology evidence="1">Single-pass membrane protein</topology>
    </subcellularLocation>
</comment>
<comment type="similarity">
    <text evidence="1">Belongs to the glycosyltransferase 51 family.</text>
</comment>
<sequence>MISVRRGFSQLWYWGKRGVIGIIALWMAGILIFAFLPVPFSMVMIERQLGAWLTGDFAYVAHSDWVPMDEISPYMALAVMAAEDQKFPDHWGFDVGAIESALSHNQRNQKRIRGASTLSQQTAKNVFLWDGRSWVRKGLEVGLTAGIELIWTKRRILTVYLNIAEFGNGIFGVEAAARHFFNKPASKLSASEAALLAAVLPNPLRFKVNAPSGYVISRQQWILRQMHQLGGKTFLQENTLD</sequence>
<organism>
    <name type="scientific">Yersinia pestis (strain Pestoides F)</name>
    <dbReference type="NCBI Taxonomy" id="386656"/>
    <lineage>
        <taxon>Bacteria</taxon>
        <taxon>Pseudomonadati</taxon>
        <taxon>Pseudomonadota</taxon>
        <taxon>Gammaproteobacteria</taxon>
        <taxon>Enterobacterales</taxon>
        <taxon>Yersiniaceae</taxon>
        <taxon>Yersinia</taxon>
    </lineage>
</organism>
<protein>
    <recommendedName>
        <fullName evidence="1">Biosynthetic peptidoglycan transglycosylase</fullName>
        <ecNumber evidence="1">2.4.99.28</ecNumber>
    </recommendedName>
    <alternativeName>
        <fullName evidence="1">Glycan polymerase</fullName>
    </alternativeName>
    <alternativeName>
        <fullName evidence="1">Peptidoglycan glycosyltransferase MtgA</fullName>
        <shortName evidence="1">PGT</shortName>
    </alternativeName>
</protein>
<gene>
    <name evidence="1" type="primary">mtgA</name>
    <name type="ordered locus">YPDSF_0345</name>
</gene>
<accession>A4THK0</accession>
<name>MTGA_YERPP</name>
<feature type="chain" id="PRO_1000017319" description="Biosynthetic peptidoglycan transglycosylase">
    <location>
        <begin position="1"/>
        <end position="241"/>
    </location>
</feature>
<feature type="transmembrane region" description="Helical" evidence="1">
    <location>
        <begin position="18"/>
        <end position="38"/>
    </location>
</feature>
<dbReference type="EC" id="2.4.99.28" evidence="1"/>
<dbReference type="EMBL" id="CP000668">
    <property type="protein sequence ID" value="ABP38762.1"/>
    <property type="molecule type" value="Genomic_DNA"/>
</dbReference>
<dbReference type="RefSeq" id="WP_002210144.1">
    <property type="nucleotide sequence ID" value="NZ_CP009715.1"/>
</dbReference>
<dbReference type="SMR" id="A4THK0"/>
<dbReference type="CAZy" id="GT51">
    <property type="family name" value="Glycosyltransferase Family 51"/>
</dbReference>
<dbReference type="GeneID" id="57975163"/>
<dbReference type="KEGG" id="ypp:YPDSF_0345"/>
<dbReference type="PATRIC" id="fig|386656.14.peg.1646"/>
<dbReference type="UniPathway" id="UPA00219"/>
<dbReference type="GO" id="GO:0009274">
    <property type="term" value="C:peptidoglycan-based cell wall"/>
    <property type="evidence" value="ECO:0007669"/>
    <property type="project" value="InterPro"/>
</dbReference>
<dbReference type="GO" id="GO:0005886">
    <property type="term" value="C:plasma membrane"/>
    <property type="evidence" value="ECO:0007669"/>
    <property type="project" value="UniProtKB-SubCell"/>
</dbReference>
<dbReference type="GO" id="GO:0016763">
    <property type="term" value="F:pentosyltransferase activity"/>
    <property type="evidence" value="ECO:0007669"/>
    <property type="project" value="InterPro"/>
</dbReference>
<dbReference type="GO" id="GO:0008955">
    <property type="term" value="F:peptidoglycan glycosyltransferase activity"/>
    <property type="evidence" value="ECO:0007669"/>
    <property type="project" value="UniProtKB-UniRule"/>
</dbReference>
<dbReference type="GO" id="GO:0071555">
    <property type="term" value="P:cell wall organization"/>
    <property type="evidence" value="ECO:0007669"/>
    <property type="project" value="UniProtKB-KW"/>
</dbReference>
<dbReference type="GO" id="GO:0009252">
    <property type="term" value="P:peptidoglycan biosynthetic process"/>
    <property type="evidence" value="ECO:0007669"/>
    <property type="project" value="UniProtKB-UniRule"/>
</dbReference>
<dbReference type="GO" id="GO:0008360">
    <property type="term" value="P:regulation of cell shape"/>
    <property type="evidence" value="ECO:0007669"/>
    <property type="project" value="UniProtKB-KW"/>
</dbReference>
<dbReference type="Gene3D" id="1.10.3810.10">
    <property type="entry name" value="Biosynthetic peptidoglycan transglycosylase-like"/>
    <property type="match status" value="1"/>
</dbReference>
<dbReference type="HAMAP" id="MF_00766">
    <property type="entry name" value="PGT_MtgA"/>
    <property type="match status" value="1"/>
</dbReference>
<dbReference type="InterPro" id="IPR001264">
    <property type="entry name" value="Glyco_trans_51"/>
</dbReference>
<dbReference type="InterPro" id="IPR023346">
    <property type="entry name" value="Lysozyme-like_dom_sf"/>
</dbReference>
<dbReference type="InterPro" id="IPR036950">
    <property type="entry name" value="PBP_transglycosylase"/>
</dbReference>
<dbReference type="InterPro" id="IPR011812">
    <property type="entry name" value="Pep_trsgly"/>
</dbReference>
<dbReference type="NCBIfam" id="TIGR02070">
    <property type="entry name" value="mono_pep_trsgly"/>
    <property type="match status" value="1"/>
</dbReference>
<dbReference type="PANTHER" id="PTHR30400:SF0">
    <property type="entry name" value="BIOSYNTHETIC PEPTIDOGLYCAN TRANSGLYCOSYLASE"/>
    <property type="match status" value="1"/>
</dbReference>
<dbReference type="PANTHER" id="PTHR30400">
    <property type="entry name" value="MONOFUNCTIONAL BIOSYNTHETIC PEPTIDOGLYCAN TRANSGLYCOSYLASE"/>
    <property type="match status" value="1"/>
</dbReference>
<dbReference type="Pfam" id="PF00912">
    <property type="entry name" value="Transgly"/>
    <property type="match status" value="1"/>
</dbReference>
<dbReference type="SUPFAM" id="SSF53955">
    <property type="entry name" value="Lysozyme-like"/>
    <property type="match status" value="1"/>
</dbReference>
<keyword id="KW-0997">Cell inner membrane</keyword>
<keyword id="KW-1003">Cell membrane</keyword>
<keyword id="KW-0133">Cell shape</keyword>
<keyword id="KW-0961">Cell wall biogenesis/degradation</keyword>
<keyword id="KW-0328">Glycosyltransferase</keyword>
<keyword id="KW-0472">Membrane</keyword>
<keyword id="KW-0573">Peptidoglycan synthesis</keyword>
<keyword id="KW-0808">Transferase</keyword>
<keyword id="KW-0812">Transmembrane</keyword>
<keyword id="KW-1133">Transmembrane helix</keyword>
<proteinExistence type="inferred from homology"/>